<sequence>MKLTVNLPNTPYDILIQRGSLAQTGAWVKELWKPQKIAIITDDHVGSLYRETVQSSLEQAGFETIVFEFPEGEASKNLDTVNQAYEFLVKNGMTRSDGIIALGGGVVGDLAGFVASTYMRGIHFLQIPTSLTAQVDSSIGGKTGVNTPFAKNMVGTFCQPDGVLIDPDTLKTLGKRELIEGMGEVVKYGLIDDVELWETLDQLDGSVESILEHADYIIYHSCEVKRKVVVEDELDNGVRLYLNFGHTIGHAIEATAGYGQVMHGEAVAIGMVQISRAAEKKGLMPAGMTAKIIAMCEKFGLPTTHQPWNVDELYASLTHDKKTRGKTIKLVIVPQLGQAAIHQIPMEEMLEFLQV</sequence>
<dbReference type="EC" id="4.2.3.4" evidence="1"/>
<dbReference type="EMBL" id="CP000408">
    <property type="protein sequence ID" value="ABP92425.1"/>
    <property type="molecule type" value="Genomic_DNA"/>
</dbReference>
<dbReference type="SMR" id="A4W236"/>
<dbReference type="KEGG" id="ssv:SSU98_1267"/>
<dbReference type="HOGENOM" id="CLU_001201_0_1_9"/>
<dbReference type="UniPathway" id="UPA00053">
    <property type="reaction ID" value="UER00085"/>
</dbReference>
<dbReference type="GO" id="GO:0005737">
    <property type="term" value="C:cytoplasm"/>
    <property type="evidence" value="ECO:0007669"/>
    <property type="project" value="UniProtKB-SubCell"/>
</dbReference>
<dbReference type="GO" id="GO:0003856">
    <property type="term" value="F:3-dehydroquinate synthase activity"/>
    <property type="evidence" value="ECO:0007669"/>
    <property type="project" value="UniProtKB-UniRule"/>
</dbReference>
<dbReference type="GO" id="GO:0046872">
    <property type="term" value="F:metal ion binding"/>
    <property type="evidence" value="ECO:0007669"/>
    <property type="project" value="UniProtKB-KW"/>
</dbReference>
<dbReference type="GO" id="GO:0000166">
    <property type="term" value="F:nucleotide binding"/>
    <property type="evidence" value="ECO:0007669"/>
    <property type="project" value="UniProtKB-KW"/>
</dbReference>
<dbReference type="GO" id="GO:0008652">
    <property type="term" value="P:amino acid biosynthetic process"/>
    <property type="evidence" value="ECO:0007669"/>
    <property type="project" value="UniProtKB-KW"/>
</dbReference>
<dbReference type="GO" id="GO:0009073">
    <property type="term" value="P:aromatic amino acid family biosynthetic process"/>
    <property type="evidence" value="ECO:0007669"/>
    <property type="project" value="UniProtKB-KW"/>
</dbReference>
<dbReference type="GO" id="GO:0009423">
    <property type="term" value="P:chorismate biosynthetic process"/>
    <property type="evidence" value="ECO:0007669"/>
    <property type="project" value="UniProtKB-UniRule"/>
</dbReference>
<dbReference type="CDD" id="cd08195">
    <property type="entry name" value="DHQS"/>
    <property type="match status" value="1"/>
</dbReference>
<dbReference type="FunFam" id="3.40.50.1970:FF:000001">
    <property type="entry name" value="3-dehydroquinate synthase"/>
    <property type="match status" value="1"/>
</dbReference>
<dbReference type="Gene3D" id="3.40.50.1970">
    <property type="match status" value="1"/>
</dbReference>
<dbReference type="Gene3D" id="1.20.1090.10">
    <property type="entry name" value="Dehydroquinate synthase-like - alpha domain"/>
    <property type="match status" value="1"/>
</dbReference>
<dbReference type="HAMAP" id="MF_00110">
    <property type="entry name" value="DHQ_synthase"/>
    <property type="match status" value="1"/>
</dbReference>
<dbReference type="InterPro" id="IPR050071">
    <property type="entry name" value="Dehydroquinate_synthase"/>
</dbReference>
<dbReference type="InterPro" id="IPR016037">
    <property type="entry name" value="DHQ_synth_AroB"/>
</dbReference>
<dbReference type="InterPro" id="IPR030963">
    <property type="entry name" value="DHQ_synth_fam"/>
</dbReference>
<dbReference type="InterPro" id="IPR030960">
    <property type="entry name" value="DHQS/DOIS_N"/>
</dbReference>
<dbReference type="InterPro" id="IPR056179">
    <property type="entry name" value="DHQS_C"/>
</dbReference>
<dbReference type="NCBIfam" id="TIGR01357">
    <property type="entry name" value="aroB"/>
    <property type="match status" value="1"/>
</dbReference>
<dbReference type="PANTHER" id="PTHR43622">
    <property type="entry name" value="3-DEHYDROQUINATE SYNTHASE"/>
    <property type="match status" value="1"/>
</dbReference>
<dbReference type="PANTHER" id="PTHR43622:SF7">
    <property type="entry name" value="3-DEHYDROQUINATE SYNTHASE, CHLOROPLASTIC"/>
    <property type="match status" value="1"/>
</dbReference>
<dbReference type="Pfam" id="PF01761">
    <property type="entry name" value="DHQ_synthase"/>
    <property type="match status" value="1"/>
</dbReference>
<dbReference type="Pfam" id="PF24621">
    <property type="entry name" value="DHQS_C"/>
    <property type="match status" value="1"/>
</dbReference>
<dbReference type="PIRSF" id="PIRSF001455">
    <property type="entry name" value="DHQ_synth"/>
    <property type="match status" value="1"/>
</dbReference>
<dbReference type="SUPFAM" id="SSF56796">
    <property type="entry name" value="Dehydroquinate synthase-like"/>
    <property type="match status" value="1"/>
</dbReference>
<protein>
    <recommendedName>
        <fullName evidence="1">3-dehydroquinate synthase</fullName>
        <shortName evidence="1">DHQS</shortName>
        <ecNumber evidence="1">4.2.3.4</ecNumber>
    </recommendedName>
</protein>
<evidence type="ECO:0000255" key="1">
    <source>
        <dbReference type="HAMAP-Rule" id="MF_00110"/>
    </source>
</evidence>
<reference key="1">
    <citation type="journal article" date="2007" name="PLoS ONE">
        <title>A glimpse of streptococcal toxic shock syndrome from comparative genomics of S. suis 2 Chinese isolates.</title>
        <authorList>
            <person name="Chen C."/>
            <person name="Tang J."/>
            <person name="Dong W."/>
            <person name="Wang C."/>
            <person name="Feng Y."/>
            <person name="Wang J."/>
            <person name="Zheng F."/>
            <person name="Pan X."/>
            <person name="Liu D."/>
            <person name="Li M."/>
            <person name="Song Y."/>
            <person name="Zhu X."/>
            <person name="Sun H."/>
            <person name="Feng T."/>
            <person name="Guo Z."/>
            <person name="Ju A."/>
            <person name="Ge J."/>
            <person name="Dong Y."/>
            <person name="Sun W."/>
            <person name="Jiang Y."/>
            <person name="Wang J."/>
            <person name="Yan J."/>
            <person name="Yang H."/>
            <person name="Wang X."/>
            <person name="Gao G.F."/>
            <person name="Yang R."/>
            <person name="Wang J."/>
            <person name="Yu J."/>
        </authorList>
    </citation>
    <scope>NUCLEOTIDE SEQUENCE [LARGE SCALE GENOMIC DNA]</scope>
    <source>
        <strain>98HAH33</strain>
    </source>
</reference>
<accession>A4W236</accession>
<comment type="function">
    <text evidence="1">Catalyzes the conversion of 3-deoxy-D-arabino-heptulosonate 7-phosphate (DAHP) to dehydroquinate (DHQ).</text>
</comment>
<comment type="catalytic activity">
    <reaction evidence="1">
        <text>7-phospho-2-dehydro-3-deoxy-D-arabino-heptonate = 3-dehydroquinate + phosphate</text>
        <dbReference type="Rhea" id="RHEA:21968"/>
        <dbReference type="ChEBI" id="CHEBI:32364"/>
        <dbReference type="ChEBI" id="CHEBI:43474"/>
        <dbReference type="ChEBI" id="CHEBI:58394"/>
        <dbReference type="EC" id="4.2.3.4"/>
    </reaction>
</comment>
<comment type="cofactor">
    <cofactor evidence="1">
        <name>Co(2+)</name>
        <dbReference type="ChEBI" id="CHEBI:48828"/>
    </cofactor>
    <cofactor evidence="1">
        <name>Zn(2+)</name>
        <dbReference type="ChEBI" id="CHEBI:29105"/>
    </cofactor>
    <text evidence="1">Binds 1 divalent metal cation per subunit. Can use either Co(2+) or Zn(2+).</text>
</comment>
<comment type="cofactor">
    <cofactor evidence="1">
        <name>NAD(+)</name>
        <dbReference type="ChEBI" id="CHEBI:57540"/>
    </cofactor>
</comment>
<comment type="pathway">
    <text evidence="1">Metabolic intermediate biosynthesis; chorismate biosynthesis; chorismate from D-erythrose 4-phosphate and phosphoenolpyruvate: step 2/7.</text>
</comment>
<comment type="subcellular location">
    <subcellularLocation>
        <location evidence="1">Cytoplasm</location>
    </subcellularLocation>
</comment>
<comment type="similarity">
    <text evidence="1">Belongs to the sugar phosphate cyclases superfamily. Dehydroquinate synthase family.</text>
</comment>
<name>AROB_STRS2</name>
<feature type="chain" id="PRO_1000094640" description="3-dehydroquinate synthase">
    <location>
        <begin position="1"/>
        <end position="355"/>
    </location>
</feature>
<feature type="binding site" evidence="1">
    <location>
        <begin position="71"/>
        <end position="76"/>
    </location>
    <ligand>
        <name>NAD(+)</name>
        <dbReference type="ChEBI" id="CHEBI:57540"/>
    </ligand>
</feature>
<feature type="binding site" evidence="1">
    <location>
        <begin position="105"/>
        <end position="109"/>
    </location>
    <ligand>
        <name>NAD(+)</name>
        <dbReference type="ChEBI" id="CHEBI:57540"/>
    </ligand>
</feature>
<feature type="binding site" evidence="1">
    <location>
        <begin position="129"/>
        <end position="130"/>
    </location>
    <ligand>
        <name>NAD(+)</name>
        <dbReference type="ChEBI" id="CHEBI:57540"/>
    </ligand>
</feature>
<feature type="binding site" evidence="1">
    <location>
        <position position="142"/>
    </location>
    <ligand>
        <name>NAD(+)</name>
        <dbReference type="ChEBI" id="CHEBI:57540"/>
    </ligand>
</feature>
<feature type="binding site" evidence="1">
    <location>
        <position position="151"/>
    </location>
    <ligand>
        <name>NAD(+)</name>
        <dbReference type="ChEBI" id="CHEBI:57540"/>
    </ligand>
</feature>
<feature type="binding site" evidence="1">
    <location>
        <begin position="169"/>
        <end position="172"/>
    </location>
    <ligand>
        <name>NAD(+)</name>
        <dbReference type="ChEBI" id="CHEBI:57540"/>
    </ligand>
</feature>
<feature type="binding site" evidence="1">
    <location>
        <position position="184"/>
    </location>
    <ligand>
        <name>Zn(2+)</name>
        <dbReference type="ChEBI" id="CHEBI:29105"/>
    </ligand>
</feature>
<feature type="binding site" evidence="1">
    <location>
        <position position="246"/>
    </location>
    <ligand>
        <name>Zn(2+)</name>
        <dbReference type="ChEBI" id="CHEBI:29105"/>
    </ligand>
</feature>
<feature type="binding site" evidence="1">
    <location>
        <position position="263"/>
    </location>
    <ligand>
        <name>Zn(2+)</name>
        <dbReference type="ChEBI" id="CHEBI:29105"/>
    </ligand>
</feature>
<keyword id="KW-0028">Amino-acid biosynthesis</keyword>
<keyword id="KW-0057">Aromatic amino acid biosynthesis</keyword>
<keyword id="KW-0170">Cobalt</keyword>
<keyword id="KW-0963">Cytoplasm</keyword>
<keyword id="KW-0456">Lyase</keyword>
<keyword id="KW-0479">Metal-binding</keyword>
<keyword id="KW-0520">NAD</keyword>
<keyword id="KW-0547">Nucleotide-binding</keyword>
<keyword id="KW-0862">Zinc</keyword>
<organism>
    <name type="scientific">Streptococcus suis (strain 98HAH33)</name>
    <dbReference type="NCBI Taxonomy" id="391296"/>
    <lineage>
        <taxon>Bacteria</taxon>
        <taxon>Bacillati</taxon>
        <taxon>Bacillota</taxon>
        <taxon>Bacilli</taxon>
        <taxon>Lactobacillales</taxon>
        <taxon>Streptococcaceae</taxon>
        <taxon>Streptococcus</taxon>
    </lineage>
</organism>
<gene>
    <name evidence="1" type="primary">aroB</name>
    <name type="ordered locus">SSU98_1267</name>
</gene>
<proteinExistence type="inferred from homology"/>